<name>Y1180_RICFE</name>
<organism>
    <name type="scientific">Rickettsia felis (strain ATCC VR-1525 / URRWXCal2)</name>
    <name type="common">Rickettsia azadi</name>
    <dbReference type="NCBI Taxonomy" id="315456"/>
    <lineage>
        <taxon>Bacteria</taxon>
        <taxon>Pseudomonadati</taxon>
        <taxon>Pseudomonadota</taxon>
        <taxon>Alphaproteobacteria</taxon>
        <taxon>Rickettsiales</taxon>
        <taxon>Rickettsiaceae</taxon>
        <taxon>Rickettsieae</taxon>
        <taxon>Rickettsia</taxon>
        <taxon>spotted fever group</taxon>
    </lineage>
</organism>
<proteinExistence type="inferred from homology"/>
<accession>Q4UKA4</accession>
<reference key="1">
    <citation type="journal article" date="2005" name="PLoS Biol.">
        <title>The genome sequence of Rickettsia felis identifies the first putative conjugative plasmid in an obligate intracellular parasite.</title>
        <authorList>
            <person name="Ogata H."/>
            <person name="Renesto P."/>
            <person name="Audic S."/>
            <person name="Robert C."/>
            <person name="Blanc G."/>
            <person name="Fournier P.-E."/>
            <person name="Parinello H."/>
            <person name="Claverie J.-M."/>
            <person name="Raoult D."/>
        </authorList>
    </citation>
    <scope>NUCLEOTIDE SEQUENCE [LARGE SCALE GENOMIC DNA]</scope>
    <source>
        <strain>ATCC VR-1525 / URRWXCal2</strain>
    </source>
</reference>
<feature type="chain" id="PRO_0000277937" description="UPF0335 protein RF_1180">
    <location>
        <begin position="1"/>
        <end position="78"/>
    </location>
</feature>
<evidence type="ECO:0000255" key="1">
    <source>
        <dbReference type="HAMAP-Rule" id="MF_00797"/>
    </source>
</evidence>
<gene>
    <name type="ordered locus">RF_1180</name>
</gene>
<dbReference type="EMBL" id="CP000053">
    <property type="protein sequence ID" value="AAY62031.1"/>
    <property type="molecule type" value="Genomic_DNA"/>
</dbReference>
<dbReference type="SMR" id="Q4UKA4"/>
<dbReference type="STRING" id="315456.RF_1180"/>
<dbReference type="KEGG" id="rfe:RF_1180"/>
<dbReference type="eggNOG" id="COG3750">
    <property type="taxonomic scope" value="Bacteria"/>
</dbReference>
<dbReference type="HOGENOM" id="CLU_158651_4_0_5"/>
<dbReference type="OrthoDB" id="9813793at2"/>
<dbReference type="Proteomes" id="UP000008548">
    <property type="component" value="Chromosome"/>
</dbReference>
<dbReference type="GO" id="GO:0003677">
    <property type="term" value="F:DNA binding"/>
    <property type="evidence" value="ECO:0007669"/>
    <property type="project" value="InterPro"/>
</dbReference>
<dbReference type="HAMAP" id="MF_00797">
    <property type="entry name" value="UPF0335"/>
    <property type="match status" value="1"/>
</dbReference>
<dbReference type="InterPro" id="IPR018753">
    <property type="entry name" value="GapR-like"/>
</dbReference>
<dbReference type="InterPro" id="IPR046367">
    <property type="entry name" value="GapR-like_DNA-bd"/>
</dbReference>
<dbReference type="NCBIfam" id="NF010247">
    <property type="entry name" value="PRK13694.1"/>
    <property type="match status" value="1"/>
</dbReference>
<dbReference type="Pfam" id="PF10073">
    <property type="entry name" value="GapR_DNA-bd"/>
    <property type="match status" value="1"/>
</dbReference>
<protein>
    <recommendedName>
        <fullName evidence="1">UPF0335 protein RF_1180</fullName>
    </recommendedName>
</protein>
<comment type="similarity">
    <text evidence="1">Belongs to the UPF0335 family.</text>
</comment>
<sequence length="78" mass="9029">MSEVVVKEQLEQYISKIERLEQEKADLSQEVKDIFQDASSHGFDVKAMKSILKLKKLDKDKLAEQDAMLELYRDTLGI</sequence>